<dbReference type="EMBL" id="EU233897">
    <property type="protein sequence ID" value="ABY71716.1"/>
    <property type="molecule type" value="mRNA"/>
</dbReference>
<dbReference type="SMR" id="B1P1G6"/>
<dbReference type="ArachnoServer" id="AS000845">
    <property type="toxin name" value="U2-theraphotoxin-Cg1b"/>
</dbReference>
<dbReference type="GO" id="GO:0005576">
    <property type="term" value="C:extracellular region"/>
    <property type="evidence" value="ECO:0007669"/>
    <property type="project" value="UniProtKB-SubCell"/>
</dbReference>
<dbReference type="GO" id="GO:0008200">
    <property type="term" value="F:ion channel inhibitor activity"/>
    <property type="evidence" value="ECO:0007669"/>
    <property type="project" value="InterPro"/>
</dbReference>
<dbReference type="GO" id="GO:0090729">
    <property type="term" value="F:toxin activity"/>
    <property type="evidence" value="ECO:0007669"/>
    <property type="project" value="UniProtKB-KW"/>
</dbReference>
<dbReference type="InterPro" id="IPR011696">
    <property type="entry name" value="Huwentoxin-1"/>
</dbReference>
<dbReference type="Pfam" id="PF07740">
    <property type="entry name" value="Toxin_12"/>
    <property type="match status" value="1"/>
</dbReference>
<dbReference type="SUPFAM" id="SSF57059">
    <property type="entry name" value="omega toxin-like"/>
    <property type="match status" value="1"/>
</dbReference>
<proteinExistence type="evidence at transcript level"/>
<feature type="signal peptide" evidence="3">
    <location>
        <begin position="1"/>
        <end position="21"/>
    </location>
</feature>
<feature type="propeptide" id="PRO_0000398492" evidence="1">
    <location>
        <begin position="22"/>
        <end position="48"/>
    </location>
</feature>
<feature type="peptide" id="PRO_0000398493" description="U2-theraphotoxin-Cg1b 1">
    <location>
        <begin position="49"/>
        <end position="84"/>
    </location>
</feature>
<feature type="disulfide bond" evidence="2">
    <location>
        <begin position="49"/>
        <end position="63"/>
    </location>
</feature>
<feature type="disulfide bond" evidence="2">
    <location>
        <begin position="56"/>
        <end position="68"/>
    </location>
</feature>
<feature type="disulfide bond" evidence="2">
    <location>
        <begin position="62"/>
        <end position="76"/>
    </location>
</feature>
<sequence>MKVSVLITLAVWGVMFLLTSAQERGSDQMDSPAWLKSMERIFQSEERECRWMFGGCTTDSDCCEHLGCRWEKPSWCAWDGTFRK</sequence>
<evidence type="ECO:0000250" key="1"/>
<evidence type="ECO:0000250" key="2">
    <source>
        <dbReference type="UniProtKB" id="P0C247"/>
    </source>
</evidence>
<evidence type="ECO:0000255" key="3"/>
<evidence type="ECO:0000305" key="4"/>
<protein>
    <recommendedName>
        <fullName>U2-theraphotoxin-Cg1b 1</fullName>
        <shortName>U2-TRTX-Cg1b</shortName>
    </recommendedName>
    <alternativeName>
        <fullName>Jingzhaotoxin-41</fullName>
        <shortName>JZTX-41</shortName>
    </alternativeName>
</protein>
<name>JZ41A_CHIGU</name>
<keyword id="KW-1015">Disulfide bond</keyword>
<keyword id="KW-0872">Ion channel impairing toxin</keyword>
<keyword id="KW-0960">Knottin</keyword>
<keyword id="KW-0964">Secreted</keyword>
<keyword id="KW-0732">Signal</keyword>
<keyword id="KW-0800">Toxin</keyword>
<comment type="function">
    <text>Probable ion channel inhibitor.</text>
</comment>
<comment type="subcellular location">
    <subcellularLocation>
        <location evidence="1">Secreted</location>
    </subcellularLocation>
</comment>
<comment type="tissue specificity">
    <text>Expressed by the venom gland.</text>
</comment>
<comment type="domain">
    <text evidence="2">The presence of a 'disulfide through disulfide knot' structurally defines this protein as a knottin.</text>
</comment>
<comment type="similarity">
    <text evidence="4">Belongs to the neurotoxin 10 (Hwtx-1) family. 06 (F4b) subfamily.</text>
</comment>
<reference key="1">
    <citation type="journal article" date="2008" name="Cell. Mol. Life Sci.">
        <title>Molecular diversity and evolution of cystine knot toxins of the tarantula Chilobrachys jingzhao.</title>
        <authorList>
            <person name="Chen J."/>
            <person name="Deng M."/>
            <person name="He Q."/>
            <person name="Meng E."/>
            <person name="Jiang L."/>
            <person name="Liao Z."/>
            <person name="Rong M."/>
            <person name="Liang S."/>
        </authorList>
    </citation>
    <scope>NUCLEOTIDE SEQUENCE [LARGE SCALE MRNA]</scope>
    <source>
        <tissue>Venom gland</tissue>
    </source>
</reference>
<organism>
    <name type="scientific">Chilobrachys guangxiensis</name>
    <name type="common">Chinese earth tiger tarantula</name>
    <name type="synonym">Chilobrachys jingzhao</name>
    <dbReference type="NCBI Taxonomy" id="278060"/>
    <lineage>
        <taxon>Eukaryota</taxon>
        <taxon>Metazoa</taxon>
        <taxon>Ecdysozoa</taxon>
        <taxon>Arthropoda</taxon>
        <taxon>Chelicerata</taxon>
        <taxon>Arachnida</taxon>
        <taxon>Araneae</taxon>
        <taxon>Mygalomorphae</taxon>
        <taxon>Theraphosidae</taxon>
        <taxon>Chilobrachys</taxon>
    </lineage>
</organism>
<accession>B1P1G6</accession>